<accession>P9WLM3</accession>
<accession>L0TB89</accession>
<accession>P64929</accession>
<accession>Q10845</accession>
<dbReference type="EMBL" id="AL123456">
    <property type="protein sequence ID" value="CCP44784.1"/>
    <property type="molecule type" value="Genomic_DNA"/>
</dbReference>
<dbReference type="PIR" id="B70760">
    <property type="entry name" value="B70760"/>
</dbReference>
<dbReference type="RefSeq" id="NP_216528.1">
    <property type="nucleotide sequence ID" value="NC_000962.3"/>
</dbReference>
<dbReference type="RefSeq" id="WP_003410080.1">
    <property type="nucleotide sequence ID" value="NC_000962.3"/>
</dbReference>
<dbReference type="SMR" id="P9WLM3"/>
<dbReference type="STRING" id="83332.Rv2012"/>
<dbReference type="PaxDb" id="83332-Rv2012"/>
<dbReference type="DNASU" id="888927"/>
<dbReference type="GeneID" id="888927"/>
<dbReference type="KEGG" id="mtu:Rv2012"/>
<dbReference type="KEGG" id="mtv:RVBD_2012"/>
<dbReference type="TubercuList" id="Rv2012"/>
<dbReference type="eggNOG" id="COG5562">
    <property type="taxonomic scope" value="Bacteria"/>
</dbReference>
<dbReference type="InParanoid" id="P9WLM3"/>
<dbReference type="OrthoDB" id="4625048at2"/>
<dbReference type="Proteomes" id="UP000001584">
    <property type="component" value="Chromosome"/>
</dbReference>
<dbReference type="Gene3D" id="3.30.1810.10">
    <property type="entry name" value="YdfO-like"/>
    <property type="match status" value="1"/>
</dbReference>
<dbReference type="InterPro" id="IPR009833">
    <property type="entry name" value="DUF1398"/>
</dbReference>
<dbReference type="InterPro" id="IPR036696">
    <property type="entry name" value="YdfO-like_sf"/>
</dbReference>
<dbReference type="Pfam" id="PF07166">
    <property type="entry name" value="DUF1398"/>
    <property type="match status" value="1"/>
</dbReference>
<dbReference type="SUPFAM" id="SSF160419">
    <property type="entry name" value="YdfO-like"/>
    <property type="match status" value="1"/>
</dbReference>
<keyword id="KW-1185">Reference proteome</keyword>
<organism>
    <name type="scientific">Mycobacterium tuberculosis (strain ATCC 25618 / H37Rv)</name>
    <dbReference type="NCBI Taxonomy" id="83332"/>
    <lineage>
        <taxon>Bacteria</taxon>
        <taxon>Bacillati</taxon>
        <taxon>Actinomycetota</taxon>
        <taxon>Actinomycetes</taxon>
        <taxon>Mycobacteriales</taxon>
        <taxon>Mycobacteriaceae</taxon>
        <taxon>Mycobacterium</taxon>
        <taxon>Mycobacterium tuberculosis complex</taxon>
    </lineage>
</organism>
<sequence length="164" mass="18203">MLSKSKRSCRRRETLRIGEKMSAPITNLQAAQRDAIMNRPAVNGFPHLAETLRRAGVRTNTWWLPAMQSLYETDYGPVLDQGVPLIDGVAEVPAFDRTALVTALRADQAGQTSFREFAAAAWRAGVLRYVVDLENRTCTYFGLHDQTYMEHYAAVEPSGGAPTS</sequence>
<name>Y2012_MYCTU</name>
<protein>
    <recommendedName>
        <fullName>Uncharacterized protein Rv2012</fullName>
    </recommendedName>
</protein>
<feature type="chain" id="PRO_0000103941" description="Uncharacterized protein Rv2012">
    <location>
        <begin position="1"/>
        <end position="164"/>
    </location>
</feature>
<gene>
    <name type="ordered locus">Rv2012</name>
    <name type="ORF">MTCY39.05c</name>
</gene>
<proteinExistence type="predicted"/>
<reference key="1">
    <citation type="journal article" date="1998" name="Nature">
        <title>Deciphering the biology of Mycobacterium tuberculosis from the complete genome sequence.</title>
        <authorList>
            <person name="Cole S.T."/>
            <person name="Brosch R."/>
            <person name="Parkhill J."/>
            <person name="Garnier T."/>
            <person name="Churcher C.M."/>
            <person name="Harris D.E."/>
            <person name="Gordon S.V."/>
            <person name="Eiglmeier K."/>
            <person name="Gas S."/>
            <person name="Barry C.E. III"/>
            <person name="Tekaia F."/>
            <person name="Badcock K."/>
            <person name="Basham D."/>
            <person name="Brown D."/>
            <person name="Chillingworth T."/>
            <person name="Connor R."/>
            <person name="Davies R.M."/>
            <person name="Devlin K."/>
            <person name="Feltwell T."/>
            <person name="Gentles S."/>
            <person name="Hamlin N."/>
            <person name="Holroyd S."/>
            <person name="Hornsby T."/>
            <person name="Jagels K."/>
            <person name="Krogh A."/>
            <person name="McLean J."/>
            <person name="Moule S."/>
            <person name="Murphy L.D."/>
            <person name="Oliver S."/>
            <person name="Osborne J."/>
            <person name="Quail M.A."/>
            <person name="Rajandream M.A."/>
            <person name="Rogers J."/>
            <person name="Rutter S."/>
            <person name="Seeger K."/>
            <person name="Skelton S."/>
            <person name="Squares S."/>
            <person name="Squares R."/>
            <person name="Sulston J.E."/>
            <person name="Taylor K."/>
            <person name="Whitehead S."/>
            <person name="Barrell B.G."/>
        </authorList>
    </citation>
    <scope>NUCLEOTIDE SEQUENCE [LARGE SCALE GENOMIC DNA]</scope>
    <source>
        <strain>ATCC 25618 / H37Rv</strain>
    </source>
</reference>